<reference key="1">
    <citation type="journal article" date="2006" name="Nat. Biotechnol.">
        <title>Genome sequence of the ubiquitous hydrocarbon-degrading marine bacterium Alcanivorax borkumensis.</title>
        <authorList>
            <person name="Schneiker S."/>
            <person name="Martins dos Santos V.A.P."/>
            <person name="Bartels D."/>
            <person name="Bekel T."/>
            <person name="Brecht M."/>
            <person name="Buhrmester J."/>
            <person name="Chernikova T.N."/>
            <person name="Denaro R."/>
            <person name="Ferrer M."/>
            <person name="Gertler C."/>
            <person name="Goesmann A."/>
            <person name="Golyshina O.V."/>
            <person name="Kaminski F."/>
            <person name="Khachane A.N."/>
            <person name="Lang S."/>
            <person name="Linke B."/>
            <person name="McHardy A.C."/>
            <person name="Meyer F."/>
            <person name="Nechitaylo T."/>
            <person name="Puehler A."/>
            <person name="Regenhardt D."/>
            <person name="Rupp O."/>
            <person name="Sabirova J.S."/>
            <person name="Selbitschka W."/>
            <person name="Yakimov M.M."/>
            <person name="Timmis K.N."/>
            <person name="Vorhoelter F.-J."/>
            <person name="Weidner S."/>
            <person name="Kaiser O."/>
            <person name="Golyshin P.N."/>
        </authorList>
    </citation>
    <scope>NUCLEOTIDE SEQUENCE [LARGE SCALE GENOMIC DNA]</scope>
    <source>
        <strain>ATCC 700651 / DSM 11573 / NCIMB 13689 / SK2</strain>
    </source>
</reference>
<accession>Q0VPK4</accession>
<organism>
    <name type="scientific">Alcanivorax borkumensis (strain ATCC 700651 / DSM 11573 / NCIMB 13689 / SK2)</name>
    <dbReference type="NCBI Taxonomy" id="393595"/>
    <lineage>
        <taxon>Bacteria</taxon>
        <taxon>Pseudomonadati</taxon>
        <taxon>Pseudomonadota</taxon>
        <taxon>Gammaproteobacteria</taxon>
        <taxon>Oceanospirillales</taxon>
        <taxon>Alcanivoracaceae</taxon>
        <taxon>Alcanivorax</taxon>
    </lineage>
</organism>
<name>MTND_ALCBS</name>
<gene>
    <name evidence="1" type="primary">mtnD</name>
    <name type="ordered locus">ABO_1446</name>
</gene>
<sequence length="181" mass="20558">MHSELKVFSDQAPGRVEQHLTDKAAMARVLASAGIRYEQWQANQALSDDPQQDEVIQAYQADIDRLIADEGYQTVDVVSMVPDHPEKTAFRQKFLEEHRHSEDEVRFFVEGQGLFTLHINGKVYEVLCSKGDLISVPANTPHWFDMGPEPRFVAIRLFNNPDGWVANFTGSDIAQQFNRLA</sequence>
<protein>
    <recommendedName>
        <fullName evidence="1">Acireductone dioxygenase</fullName>
    </recommendedName>
    <alternativeName>
        <fullName evidence="1">1,2-dihydroxy-3-keto-5-methylthiopentene dioxygenase</fullName>
        <shortName evidence="1">DHK-MTPene dioxygenase</shortName>
    </alternativeName>
    <alternativeName>
        <fullName evidence="1">Acireductone dioxygenase (Fe(2+)-requiring)</fullName>
        <shortName evidence="1">ARD'</shortName>
        <shortName evidence="1">Fe-ARD</shortName>
        <ecNumber evidence="1">1.13.11.54</ecNumber>
    </alternativeName>
    <alternativeName>
        <fullName evidence="1">Acireductone dioxygenase (Ni(2+)-requiring)</fullName>
        <shortName evidence="1">ARD</shortName>
        <shortName evidence="1">Ni-ARD</shortName>
        <ecNumber evidence="1">1.13.11.53</ecNumber>
    </alternativeName>
</protein>
<keyword id="KW-0028">Amino-acid biosynthesis</keyword>
<keyword id="KW-0223">Dioxygenase</keyword>
<keyword id="KW-0408">Iron</keyword>
<keyword id="KW-0479">Metal-binding</keyword>
<keyword id="KW-0486">Methionine biosynthesis</keyword>
<keyword id="KW-0533">Nickel</keyword>
<keyword id="KW-0560">Oxidoreductase</keyword>
<keyword id="KW-1185">Reference proteome</keyword>
<feature type="chain" id="PRO_0000359169" description="Acireductone dioxygenase">
    <location>
        <begin position="1"/>
        <end position="181"/>
    </location>
</feature>
<feature type="binding site" evidence="1">
    <location>
        <position position="98"/>
    </location>
    <ligand>
        <name>Fe(2+)</name>
        <dbReference type="ChEBI" id="CHEBI:29033"/>
    </ligand>
</feature>
<feature type="binding site" evidence="1">
    <location>
        <position position="98"/>
    </location>
    <ligand>
        <name>Ni(2+)</name>
        <dbReference type="ChEBI" id="CHEBI:49786"/>
    </ligand>
</feature>
<feature type="binding site" evidence="1">
    <location>
        <position position="100"/>
    </location>
    <ligand>
        <name>Fe(2+)</name>
        <dbReference type="ChEBI" id="CHEBI:29033"/>
    </ligand>
</feature>
<feature type="binding site" evidence="1">
    <location>
        <position position="100"/>
    </location>
    <ligand>
        <name>Ni(2+)</name>
        <dbReference type="ChEBI" id="CHEBI:49786"/>
    </ligand>
</feature>
<feature type="binding site" evidence="1">
    <location>
        <position position="104"/>
    </location>
    <ligand>
        <name>Fe(2+)</name>
        <dbReference type="ChEBI" id="CHEBI:29033"/>
    </ligand>
</feature>
<feature type="binding site" evidence="1">
    <location>
        <position position="104"/>
    </location>
    <ligand>
        <name>Ni(2+)</name>
        <dbReference type="ChEBI" id="CHEBI:49786"/>
    </ligand>
</feature>
<feature type="binding site" evidence="1">
    <location>
        <position position="142"/>
    </location>
    <ligand>
        <name>Fe(2+)</name>
        <dbReference type="ChEBI" id="CHEBI:29033"/>
    </ligand>
</feature>
<feature type="binding site" evidence="1">
    <location>
        <position position="142"/>
    </location>
    <ligand>
        <name>Ni(2+)</name>
        <dbReference type="ChEBI" id="CHEBI:49786"/>
    </ligand>
</feature>
<feature type="site" description="May play a role in metal incorporation in vivo" evidence="1">
    <location>
        <position position="97"/>
    </location>
</feature>
<feature type="site" description="May play a role in transmitting local conformational changes" evidence="1">
    <location>
        <position position="103"/>
    </location>
</feature>
<feature type="site" description="Important to generate the dianion" evidence="1">
    <location>
        <position position="106"/>
    </location>
</feature>
<dbReference type="EC" id="1.13.11.54" evidence="1"/>
<dbReference type="EC" id="1.13.11.53" evidence="1"/>
<dbReference type="EMBL" id="AM286690">
    <property type="protein sequence ID" value="CAL16894.1"/>
    <property type="molecule type" value="Genomic_DNA"/>
</dbReference>
<dbReference type="RefSeq" id="WP_011588727.1">
    <property type="nucleotide sequence ID" value="NC_008260.1"/>
</dbReference>
<dbReference type="SMR" id="Q0VPK4"/>
<dbReference type="STRING" id="393595.ABO_1446"/>
<dbReference type="KEGG" id="abo:ABO_1446"/>
<dbReference type="eggNOG" id="COG1791">
    <property type="taxonomic scope" value="Bacteria"/>
</dbReference>
<dbReference type="HOGENOM" id="CLU_125400_0_0_6"/>
<dbReference type="OrthoDB" id="9795636at2"/>
<dbReference type="UniPathway" id="UPA00904">
    <property type="reaction ID" value="UER00878"/>
</dbReference>
<dbReference type="Proteomes" id="UP000008871">
    <property type="component" value="Chromosome"/>
</dbReference>
<dbReference type="GO" id="GO:0010308">
    <property type="term" value="F:acireductone dioxygenase (Ni2+-requiring) activity"/>
    <property type="evidence" value="ECO:0007669"/>
    <property type="project" value="UniProtKB-UniRule"/>
</dbReference>
<dbReference type="GO" id="GO:0010309">
    <property type="term" value="F:acireductone dioxygenase [iron(II)-requiring] activity"/>
    <property type="evidence" value="ECO:0007669"/>
    <property type="project" value="UniProtKB-UniRule"/>
</dbReference>
<dbReference type="GO" id="GO:0005506">
    <property type="term" value="F:iron ion binding"/>
    <property type="evidence" value="ECO:0007669"/>
    <property type="project" value="UniProtKB-UniRule"/>
</dbReference>
<dbReference type="GO" id="GO:0016151">
    <property type="term" value="F:nickel cation binding"/>
    <property type="evidence" value="ECO:0007669"/>
    <property type="project" value="UniProtKB-UniRule"/>
</dbReference>
<dbReference type="GO" id="GO:0019509">
    <property type="term" value="P:L-methionine salvage from methylthioadenosine"/>
    <property type="evidence" value="ECO:0007669"/>
    <property type="project" value="UniProtKB-UniRule"/>
</dbReference>
<dbReference type="GO" id="GO:0019284">
    <property type="term" value="P:L-methionine salvage from S-adenosylmethionine"/>
    <property type="evidence" value="ECO:0007669"/>
    <property type="project" value="InterPro"/>
</dbReference>
<dbReference type="CDD" id="cd02232">
    <property type="entry name" value="cupin_ARD"/>
    <property type="match status" value="1"/>
</dbReference>
<dbReference type="Gene3D" id="2.60.120.10">
    <property type="entry name" value="Jelly Rolls"/>
    <property type="match status" value="1"/>
</dbReference>
<dbReference type="HAMAP" id="MF_01682">
    <property type="entry name" value="Salvage_MtnD"/>
    <property type="match status" value="1"/>
</dbReference>
<dbReference type="InterPro" id="IPR004313">
    <property type="entry name" value="ARD"/>
</dbReference>
<dbReference type="InterPro" id="IPR023956">
    <property type="entry name" value="ARD_bac"/>
</dbReference>
<dbReference type="InterPro" id="IPR014710">
    <property type="entry name" value="RmlC-like_jellyroll"/>
</dbReference>
<dbReference type="InterPro" id="IPR011051">
    <property type="entry name" value="RmlC_Cupin_sf"/>
</dbReference>
<dbReference type="PANTHER" id="PTHR23418">
    <property type="entry name" value="ACIREDUCTONE DIOXYGENASE"/>
    <property type="match status" value="1"/>
</dbReference>
<dbReference type="PANTHER" id="PTHR23418:SF0">
    <property type="entry name" value="ACIREDUCTONE DIOXYGENASE"/>
    <property type="match status" value="1"/>
</dbReference>
<dbReference type="Pfam" id="PF03079">
    <property type="entry name" value="ARD"/>
    <property type="match status" value="1"/>
</dbReference>
<dbReference type="SUPFAM" id="SSF51182">
    <property type="entry name" value="RmlC-like cupins"/>
    <property type="match status" value="1"/>
</dbReference>
<evidence type="ECO:0000255" key="1">
    <source>
        <dbReference type="HAMAP-Rule" id="MF_01682"/>
    </source>
</evidence>
<comment type="function">
    <text evidence="1">Catalyzes 2 different reactions between oxygen and the acireductone 1,2-dihydroxy-3-keto-5-methylthiopentene (DHK-MTPene) depending upon the metal bound in the active site. Fe-containing acireductone dioxygenase (Fe-ARD) produces formate and 2-keto-4-methylthiobutyrate (KMTB), the alpha-ketoacid precursor of methionine in the methionine recycle pathway. Ni-containing acireductone dioxygenase (Ni-ARD) produces methylthiopropionate, carbon monoxide and formate, and does not lie on the methionine recycle pathway.</text>
</comment>
<comment type="catalytic activity">
    <reaction evidence="1">
        <text>1,2-dihydroxy-5-(methylsulfanyl)pent-1-en-3-one + O2 = 3-(methylsulfanyl)propanoate + CO + formate + 2 H(+)</text>
        <dbReference type="Rhea" id="RHEA:14161"/>
        <dbReference type="ChEBI" id="CHEBI:15378"/>
        <dbReference type="ChEBI" id="CHEBI:15379"/>
        <dbReference type="ChEBI" id="CHEBI:15740"/>
        <dbReference type="ChEBI" id="CHEBI:17245"/>
        <dbReference type="ChEBI" id="CHEBI:49016"/>
        <dbReference type="ChEBI" id="CHEBI:49252"/>
        <dbReference type="EC" id="1.13.11.53"/>
    </reaction>
</comment>
<comment type="catalytic activity">
    <reaction evidence="1">
        <text>1,2-dihydroxy-5-(methylsulfanyl)pent-1-en-3-one + O2 = 4-methylsulfanyl-2-oxobutanoate + formate + 2 H(+)</text>
        <dbReference type="Rhea" id="RHEA:24504"/>
        <dbReference type="ChEBI" id="CHEBI:15378"/>
        <dbReference type="ChEBI" id="CHEBI:15379"/>
        <dbReference type="ChEBI" id="CHEBI:15740"/>
        <dbReference type="ChEBI" id="CHEBI:16723"/>
        <dbReference type="ChEBI" id="CHEBI:49252"/>
        <dbReference type="EC" id="1.13.11.54"/>
    </reaction>
</comment>
<comment type="cofactor">
    <cofactor evidence="1">
        <name>Fe(2+)</name>
        <dbReference type="ChEBI" id="CHEBI:29033"/>
    </cofactor>
    <text evidence="1">Binds 1 Fe(2+) cation per monomer.</text>
</comment>
<comment type="cofactor">
    <cofactor evidence="1">
        <name>Ni(2+)</name>
        <dbReference type="ChEBI" id="CHEBI:49786"/>
    </cofactor>
    <text evidence="1">Binds 1 nickel ion per monomer.</text>
</comment>
<comment type="pathway">
    <text evidence="1">Amino-acid biosynthesis; L-methionine biosynthesis via salvage pathway; L-methionine from S-methyl-5-thio-alpha-D-ribose 1-phosphate: step 5/6.</text>
</comment>
<comment type="subunit">
    <text evidence="1">Monomer.</text>
</comment>
<comment type="similarity">
    <text evidence="1">Belongs to the acireductone dioxygenase (ARD) family.</text>
</comment>
<proteinExistence type="inferred from homology"/>